<reference key="1">
    <citation type="journal article" date="1988" name="Nucleic Acids Res.">
        <title>Nucleotide sequence of a human cDNA encoding a ras-related protein (rap1B).</title>
        <authorList>
            <person name="Pizon V."/>
            <person name="Lerosey I."/>
            <person name="Chardin P."/>
            <person name="Tavitian A."/>
        </authorList>
    </citation>
    <scope>NUCLEOTIDE SEQUENCE [MRNA] (ISOFORM 1)</scope>
</reference>
<reference key="2">
    <citation type="journal article" date="2007" name="BMC Genomics">
        <title>The full-ORF clone resource of the German cDNA consortium.</title>
        <authorList>
            <person name="Bechtel S."/>
            <person name="Rosenfelder H."/>
            <person name="Duda A."/>
            <person name="Schmidt C.P."/>
            <person name="Ernst U."/>
            <person name="Wellenreuther R."/>
            <person name="Mehrle A."/>
            <person name="Schuster C."/>
            <person name="Bahr A."/>
            <person name="Bloecker H."/>
            <person name="Heubner D."/>
            <person name="Hoerlein A."/>
            <person name="Michel G."/>
            <person name="Wedler H."/>
            <person name="Koehrer K."/>
            <person name="Ottenwaelder B."/>
            <person name="Poustka A."/>
            <person name="Wiemann S."/>
            <person name="Schupp I."/>
        </authorList>
    </citation>
    <scope>NUCLEOTIDE SEQUENCE [LARGE SCALE MRNA] (ISOFORM 1)</scope>
    <source>
        <tissue>Uterus</tissue>
    </source>
</reference>
<reference key="3">
    <citation type="submission" date="2001-05" db="EMBL/GenBank/DDBJ databases">
        <title>Identification of immuno-peptidmics that are recognized by tumor-reactive CTL generated from TIL of colon cancer patients.</title>
        <authorList>
            <person name="Shichijo S."/>
            <person name="Itoh K."/>
        </authorList>
    </citation>
    <scope>NUCLEOTIDE SEQUENCE [LARGE SCALE MRNA] (ISOFORM 1)</scope>
    <source>
        <tissue>Colon adenocarcinoma</tissue>
    </source>
</reference>
<reference key="4">
    <citation type="submission" date="2002-03" db="EMBL/GenBank/DDBJ databases">
        <title>cDNA clones of human proteins involved in signal transduction sequenced by the Guthrie cDNA resource center (www.cdna.org).</title>
        <authorList>
            <person name="Puhl H.L. III"/>
            <person name="Ikeda S.R."/>
            <person name="Aronstam R.S."/>
        </authorList>
    </citation>
    <scope>NUCLEOTIDE SEQUENCE [LARGE SCALE MRNA] (ISOFORM 1)</scope>
    <source>
        <tissue>Brain</tissue>
    </source>
</reference>
<reference key="5">
    <citation type="journal article" date="2004" name="Nat. Genet.">
        <title>Complete sequencing and characterization of 21,243 full-length human cDNAs.</title>
        <authorList>
            <person name="Ota T."/>
            <person name="Suzuki Y."/>
            <person name="Nishikawa T."/>
            <person name="Otsuki T."/>
            <person name="Sugiyama T."/>
            <person name="Irie R."/>
            <person name="Wakamatsu A."/>
            <person name="Hayashi K."/>
            <person name="Sato H."/>
            <person name="Nagai K."/>
            <person name="Kimura K."/>
            <person name="Makita H."/>
            <person name="Sekine M."/>
            <person name="Obayashi M."/>
            <person name="Nishi T."/>
            <person name="Shibahara T."/>
            <person name="Tanaka T."/>
            <person name="Ishii S."/>
            <person name="Yamamoto J."/>
            <person name="Saito K."/>
            <person name="Kawai Y."/>
            <person name="Isono Y."/>
            <person name="Nakamura Y."/>
            <person name="Nagahari K."/>
            <person name="Murakami K."/>
            <person name="Yasuda T."/>
            <person name="Iwayanagi T."/>
            <person name="Wagatsuma M."/>
            <person name="Shiratori A."/>
            <person name="Sudo H."/>
            <person name="Hosoiri T."/>
            <person name="Kaku Y."/>
            <person name="Kodaira H."/>
            <person name="Kondo H."/>
            <person name="Sugawara M."/>
            <person name="Takahashi M."/>
            <person name="Kanda K."/>
            <person name="Yokoi T."/>
            <person name="Furuya T."/>
            <person name="Kikkawa E."/>
            <person name="Omura Y."/>
            <person name="Abe K."/>
            <person name="Kamihara K."/>
            <person name="Katsuta N."/>
            <person name="Sato K."/>
            <person name="Tanikawa M."/>
            <person name="Yamazaki M."/>
            <person name="Ninomiya K."/>
            <person name="Ishibashi T."/>
            <person name="Yamashita H."/>
            <person name="Murakawa K."/>
            <person name="Fujimori K."/>
            <person name="Tanai H."/>
            <person name="Kimata M."/>
            <person name="Watanabe M."/>
            <person name="Hiraoka S."/>
            <person name="Chiba Y."/>
            <person name="Ishida S."/>
            <person name="Ono Y."/>
            <person name="Takiguchi S."/>
            <person name="Watanabe S."/>
            <person name="Yosida M."/>
            <person name="Hotuta T."/>
            <person name="Kusano J."/>
            <person name="Kanehori K."/>
            <person name="Takahashi-Fujii A."/>
            <person name="Hara H."/>
            <person name="Tanase T.-O."/>
            <person name="Nomura Y."/>
            <person name="Togiya S."/>
            <person name="Komai F."/>
            <person name="Hara R."/>
            <person name="Takeuchi K."/>
            <person name="Arita M."/>
            <person name="Imose N."/>
            <person name="Musashino K."/>
            <person name="Yuuki H."/>
            <person name="Oshima A."/>
            <person name="Sasaki N."/>
            <person name="Aotsuka S."/>
            <person name="Yoshikawa Y."/>
            <person name="Matsunawa H."/>
            <person name="Ichihara T."/>
            <person name="Shiohata N."/>
            <person name="Sano S."/>
            <person name="Moriya S."/>
            <person name="Momiyama H."/>
            <person name="Satoh N."/>
            <person name="Takami S."/>
            <person name="Terashima Y."/>
            <person name="Suzuki O."/>
            <person name="Nakagawa S."/>
            <person name="Senoh A."/>
            <person name="Mizoguchi H."/>
            <person name="Goto Y."/>
            <person name="Shimizu F."/>
            <person name="Wakebe H."/>
            <person name="Hishigaki H."/>
            <person name="Watanabe T."/>
            <person name="Sugiyama A."/>
            <person name="Takemoto M."/>
            <person name="Kawakami B."/>
            <person name="Yamazaki M."/>
            <person name="Watanabe K."/>
            <person name="Kumagai A."/>
            <person name="Itakura S."/>
            <person name="Fukuzumi Y."/>
            <person name="Fujimori Y."/>
            <person name="Komiyama M."/>
            <person name="Tashiro H."/>
            <person name="Tanigami A."/>
            <person name="Fujiwara T."/>
            <person name="Ono T."/>
            <person name="Yamada K."/>
            <person name="Fujii Y."/>
            <person name="Ozaki K."/>
            <person name="Hirao M."/>
            <person name="Ohmori Y."/>
            <person name="Kawabata A."/>
            <person name="Hikiji T."/>
            <person name="Kobatake N."/>
            <person name="Inagaki H."/>
            <person name="Ikema Y."/>
            <person name="Okamoto S."/>
            <person name="Okitani R."/>
            <person name="Kawakami T."/>
            <person name="Noguchi S."/>
            <person name="Itoh T."/>
            <person name="Shigeta K."/>
            <person name="Senba T."/>
            <person name="Matsumura K."/>
            <person name="Nakajima Y."/>
            <person name="Mizuno T."/>
            <person name="Morinaga M."/>
            <person name="Sasaki M."/>
            <person name="Togashi T."/>
            <person name="Oyama M."/>
            <person name="Hata H."/>
            <person name="Watanabe M."/>
            <person name="Komatsu T."/>
            <person name="Mizushima-Sugano J."/>
            <person name="Satoh T."/>
            <person name="Shirai Y."/>
            <person name="Takahashi Y."/>
            <person name="Nakagawa K."/>
            <person name="Okumura K."/>
            <person name="Nagase T."/>
            <person name="Nomura N."/>
            <person name="Kikuchi H."/>
            <person name="Masuho Y."/>
            <person name="Yamashita R."/>
            <person name="Nakai K."/>
            <person name="Yada T."/>
            <person name="Nakamura Y."/>
            <person name="Ohara O."/>
            <person name="Isogai T."/>
            <person name="Sugano S."/>
        </authorList>
    </citation>
    <scope>NUCLEOTIDE SEQUENCE [LARGE SCALE MRNA] (ISOFORMS 1; 2; 3 AND 4)</scope>
    <source>
        <tissue>Amygdala</tissue>
    </source>
</reference>
<reference key="6">
    <citation type="submission" date="2004-06" db="EMBL/GenBank/DDBJ databases">
        <title>Cloning of human full open reading frames in Gateway(TM) system entry vector (pDONR201).</title>
        <authorList>
            <person name="Ebert L."/>
            <person name="Schick M."/>
            <person name="Neubert P."/>
            <person name="Schatten R."/>
            <person name="Henze S."/>
            <person name="Korn B."/>
        </authorList>
    </citation>
    <scope>NUCLEOTIDE SEQUENCE [LARGE SCALE MRNA] (ISOFORM 1)</scope>
</reference>
<reference key="7">
    <citation type="submission" date="2004-10" db="EMBL/GenBank/DDBJ databases">
        <title>Cloning of human full-length CDSs in BD Creator(TM) system donor vector.</title>
        <authorList>
            <person name="Kalnine N."/>
            <person name="Chen X."/>
            <person name="Rolfs A."/>
            <person name="Halleck A."/>
            <person name="Hines L."/>
            <person name="Eisenstein S."/>
            <person name="Koundinya M."/>
            <person name="Raphael J."/>
            <person name="Moreira D."/>
            <person name="Kelley T."/>
            <person name="LaBaer J."/>
            <person name="Lin Y."/>
            <person name="Phelan M."/>
            <person name="Farmer A."/>
        </authorList>
    </citation>
    <scope>NUCLEOTIDE SEQUENCE [LARGE SCALE MRNA] (ISOFORM 1)</scope>
</reference>
<reference key="8">
    <citation type="submission" date="2007-04" db="EMBL/GenBank/DDBJ databases">
        <authorList>
            <consortium name="SeattleSNPs variation discovery resource"/>
        </authorList>
    </citation>
    <scope>NUCLEOTIDE SEQUENCE [GENOMIC DNA]</scope>
</reference>
<reference key="9">
    <citation type="journal article" date="2006" name="Nature">
        <title>The finished DNA sequence of human chromosome 12.</title>
        <authorList>
            <person name="Scherer S.E."/>
            <person name="Muzny D.M."/>
            <person name="Buhay C.J."/>
            <person name="Chen R."/>
            <person name="Cree A."/>
            <person name="Ding Y."/>
            <person name="Dugan-Rocha S."/>
            <person name="Gill R."/>
            <person name="Gunaratne P."/>
            <person name="Harris R.A."/>
            <person name="Hawes A.C."/>
            <person name="Hernandez J."/>
            <person name="Hodgson A.V."/>
            <person name="Hume J."/>
            <person name="Jackson A."/>
            <person name="Khan Z.M."/>
            <person name="Kovar-Smith C."/>
            <person name="Lewis L.R."/>
            <person name="Lozado R.J."/>
            <person name="Metzker M.L."/>
            <person name="Milosavljevic A."/>
            <person name="Miner G.R."/>
            <person name="Montgomery K.T."/>
            <person name="Morgan M.B."/>
            <person name="Nazareth L.V."/>
            <person name="Scott G."/>
            <person name="Sodergren E."/>
            <person name="Song X.-Z."/>
            <person name="Steffen D."/>
            <person name="Lovering R.C."/>
            <person name="Wheeler D.A."/>
            <person name="Worley K.C."/>
            <person name="Yuan Y."/>
            <person name="Zhang Z."/>
            <person name="Adams C.Q."/>
            <person name="Ansari-Lari M.A."/>
            <person name="Ayele M."/>
            <person name="Brown M.J."/>
            <person name="Chen G."/>
            <person name="Chen Z."/>
            <person name="Clerc-Blankenburg K.P."/>
            <person name="Davis C."/>
            <person name="Delgado O."/>
            <person name="Dinh H.H."/>
            <person name="Draper H."/>
            <person name="Gonzalez-Garay M.L."/>
            <person name="Havlak P."/>
            <person name="Jackson L.R."/>
            <person name="Jacob L.S."/>
            <person name="Kelly S.H."/>
            <person name="Li L."/>
            <person name="Li Z."/>
            <person name="Liu J."/>
            <person name="Liu W."/>
            <person name="Lu J."/>
            <person name="Maheshwari M."/>
            <person name="Nguyen B.-V."/>
            <person name="Okwuonu G.O."/>
            <person name="Pasternak S."/>
            <person name="Perez L.M."/>
            <person name="Plopper F.J.H."/>
            <person name="Santibanez J."/>
            <person name="Shen H."/>
            <person name="Tabor P.E."/>
            <person name="Verduzco D."/>
            <person name="Waldron L."/>
            <person name="Wang Q."/>
            <person name="Williams G.A."/>
            <person name="Zhang J."/>
            <person name="Zhou J."/>
            <person name="Allen C.C."/>
            <person name="Amin A.G."/>
            <person name="Anyalebechi V."/>
            <person name="Bailey M."/>
            <person name="Barbaria J.A."/>
            <person name="Bimage K.E."/>
            <person name="Bryant N.P."/>
            <person name="Burch P.E."/>
            <person name="Burkett C.E."/>
            <person name="Burrell K.L."/>
            <person name="Calderon E."/>
            <person name="Cardenas V."/>
            <person name="Carter K."/>
            <person name="Casias K."/>
            <person name="Cavazos I."/>
            <person name="Cavazos S.R."/>
            <person name="Ceasar H."/>
            <person name="Chacko J."/>
            <person name="Chan S.N."/>
            <person name="Chavez D."/>
            <person name="Christopoulos C."/>
            <person name="Chu J."/>
            <person name="Cockrell R."/>
            <person name="Cox C.D."/>
            <person name="Dang M."/>
            <person name="Dathorne S.R."/>
            <person name="David R."/>
            <person name="Davis C.M."/>
            <person name="Davy-Carroll L."/>
            <person name="Deshazo D.R."/>
            <person name="Donlin J.E."/>
            <person name="D'Souza L."/>
            <person name="Eaves K.A."/>
            <person name="Egan A."/>
            <person name="Emery-Cohen A.J."/>
            <person name="Escotto M."/>
            <person name="Flagg N."/>
            <person name="Forbes L.D."/>
            <person name="Gabisi A.M."/>
            <person name="Garza M."/>
            <person name="Hamilton C."/>
            <person name="Henderson N."/>
            <person name="Hernandez O."/>
            <person name="Hines S."/>
            <person name="Hogues M.E."/>
            <person name="Huang M."/>
            <person name="Idlebird D.G."/>
            <person name="Johnson R."/>
            <person name="Jolivet A."/>
            <person name="Jones S."/>
            <person name="Kagan R."/>
            <person name="King L.M."/>
            <person name="Leal B."/>
            <person name="Lebow H."/>
            <person name="Lee S."/>
            <person name="LeVan J.M."/>
            <person name="Lewis L.C."/>
            <person name="London P."/>
            <person name="Lorensuhewa L.M."/>
            <person name="Loulseged H."/>
            <person name="Lovett D.A."/>
            <person name="Lucier A."/>
            <person name="Lucier R.L."/>
            <person name="Ma J."/>
            <person name="Madu R.C."/>
            <person name="Mapua P."/>
            <person name="Martindale A.D."/>
            <person name="Martinez E."/>
            <person name="Massey E."/>
            <person name="Mawhiney S."/>
            <person name="Meador M.G."/>
            <person name="Mendez S."/>
            <person name="Mercado C."/>
            <person name="Mercado I.C."/>
            <person name="Merritt C.E."/>
            <person name="Miner Z.L."/>
            <person name="Minja E."/>
            <person name="Mitchell T."/>
            <person name="Mohabbat F."/>
            <person name="Mohabbat K."/>
            <person name="Montgomery B."/>
            <person name="Moore N."/>
            <person name="Morris S."/>
            <person name="Munidasa M."/>
            <person name="Ngo R.N."/>
            <person name="Nguyen N.B."/>
            <person name="Nickerson E."/>
            <person name="Nwaokelemeh O.O."/>
            <person name="Nwokenkwo S."/>
            <person name="Obregon M."/>
            <person name="Oguh M."/>
            <person name="Oragunye N."/>
            <person name="Oviedo R.J."/>
            <person name="Parish B.J."/>
            <person name="Parker D.N."/>
            <person name="Parrish J."/>
            <person name="Parks K.L."/>
            <person name="Paul H.A."/>
            <person name="Payton B.A."/>
            <person name="Perez A."/>
            <person name="Perrin W."/>
            <person name="Pickens A."/>
            <person name="Primus E.L."/>
            <person name="Pu L.-L."/>
            <person name="Puazo M."/>
            <person name="Quiles M.M."/>
            <person name="Quiroz J.B."/>
            <person name="Rabata D."/>
            <person name="Reeves K."/>
            <person name="Ruiz S.J."/>
            <person name="Shao H."/>
            <person name="Sisson I."/>
            <person name="Sonaike T."/>
            <person name="Sorelle R.P."/>
            <person name="Sutton A.E."/>
            <person name="Svatek A.F."/>
            <person name="Svetz L.A."/>
            <person name="Tamerisa K.S."/>
            <person name="Taylor T.R."/>
            <person name="Teague B."/>
            <person name="Thomas N."/>
            <person name="Thorn R.D."/>
            <person name="Trejos Z.Y."/>
            <person name="Trevino B.K."/>
            <person name="Ukegbu O.N."/>
            <person name="Urban J.B."/>
            <person name="Vasquez L.I."/>
            <person name="Vera V.A."/>
            <person name="Villasana D.M."/>
            <person name="Wang L."/>
            <person name="Ward-Moore S."/>
            <person name="Warren J.T."/>
            <person name="Wei X."/>
            <person name="White F."/>
            <person name="Williamson A.L."/>
            <person name="Wleczyk R."/>
            <person name="Wooden H.S."/>
            <person name="Wooden S.H."/>
            <person name="Yen J."/>
            <person name="Yoon L."/>
            <person name="Yoon V."/>
            <person name="Zorrilla S.E."/>
            <person name="Nelson D."/>
            <person name="Kucherlapati R."/>
            <person name="Weinstock G."/>
            <person name="Gibbs R.A."/>
        </authorList>
    </citation>
    <scope>NUCLEOTIDE SEQUENCE [LARGE SCALE GENOMIC DNA]</scope>
</reference>
<reference key="10">
    <citation type="submission" date="2005-07" db="EMBL/GenBank/DDBJ databases">
        <authorList>
            <person name="Mural R.J."/>
            <person name="Istrail S."/>
            <person name="Sutton G.G."/>
            <person name="Florea L."/>
            <person name="Halpern A.L."/>
            <person name="Mobarry C.M."/>
            <person name="Lippert R."/>
            <person name="Walenz B."/>
            <person name="Shatkay H."/>
            <person name="Dew I."/>
            <person name="Miller J.R."/>
            <person name="Flanigan M.J."/>
            <person name="Edwards N.J."/>
            <person name="Bolanos R."/>
            <person name="Fasulo D."/>
            <person name="Halldorsson B.V."/>
            <person name="Hannenhalli S."/>
            <person name="Turner R."/>
            <person name="Yooseph S."/>
            <person name="Lu F."/>
            <person name="Nusskern D.R."/>
            <person name="Shue B.C."/>
            <person name="Zheng X.H."/>
            <person name="Zhong F."/>
            <person name="Delcher A.L."/>
            <person name="Huson D.H."/>
            <person name="Kravitz S.A."/>
            <person name="Mouchard L."/>
            <person name="Reinert K."/>
            <person name="Remington K.A."/>
            <person name="Clark A.G."/>
            <person name="Waterman M.S."/>
            <person name="Eichler E.E."/>
            <person name="Adams M.D."/>
            <person name="Hunkapiller M.W."/>
            <person name="Myers E.W."/>
            <person name="Venter J.C."/>
        </authorList>
    </citation>
    <scope>NUCLEOTIDE SEQUENCE [LARGE SCALE GENOMIC DNA]</scope>
</reference>
<reference key="11">
    <citation type="journal article" date="2004" name="Genome Res.">
        <title>The status, quality, and expansion of the NIH full-length cDNA project: the Mammalian Gene Collection (MGC).</title>
        <authorList>
            <consortium name="The MGC Project Team"/>
        </authorList>
    </citation>
    <scope>NUCLEOTIDE SEQUENCE [LARGE SCALE MRNA] (ISOFORM 1)</scope>
    <source>
        <tissue>Chondrosarcoma</tissue>
        <tissue>Placenta</tissue>
        <tissue>Testis</tissue>
    </source>
</reference>
<reference key="12">
    <citation type="journal article" date="1988" name="J. Biol. Chem.">
        <title>Purification and characterization of the 22,000-dalton GTP-binding protein substrate for ADP-ribosylation by botulinum toxin, G22K.</title>
        <authorList>
            <person name="Bokoch G.M."/>
            <person name="Parkos C.A."/>
            <person name="Mumby S.M."/>
        </authorList>
    </citation>
    <scope>PROTEIN SEQUENCE OF 1-35</scope>
    <scope>SUBCELLULAR LOCATION</scope>
    <scope>ADP-RIBOSYLATION AT SER-39</scope>
</reference>
<reference key="13">
    <citation type="journal article" date="1990" name="Biochem. Biophys. Res. Commun.">
        <title>Rap1-B is phosphorylated by protein kinase A in intact human platelets.</title>
        <authorList>
            <person name="Siess W."/>
            <person name="Winegar D.A."/>
            <person name="Lapetina E.G."/>
        </authorList>
    </citation>
    <scope>PROTEIN SEQUENCE OF 146-180</scope>
    <scope>PHOSPHORYLATION</scope>
</reference>
<reference key="14">
    <citation type="journal article" date="2003" name="Nat. Biotechnol.">
        <title>Exploring proteomes and analyzing protein processing by mass spectrometric identification of sorted N-terminal peptides.</title>
        <authorList>
            <person name="Gevaert K."/>
            <person name="Goethals M."/>
            <person name="Martens L."/>
            <person name="Van Damme J."/>
            <person name="Staes A."/>
            <person name="Thomas G.R."/>
            <person name="Vandekerckhove J."/>
        </authorList>
    </citation>
    <scope>PROTEIN SEQUENCE OF 168-176</scope>
    <source>
        <tissue>Platelet</tissue>
    </source>
</reference>
<reference key="15">
    <citation type="journal article" date="1990" name="Proc. Natl. Acad. Sci. U.S.A.">
        <title>Posttranslationally processed structure of the human platelet protein smg p21B: evidence for geranylgeranylation and carboxyl methylation of the C-terminal cysteine.</title>
        <authorList>
            <person name="Kawata M."/>
            <person name="Farnsworth C.C."/>
            <person name="Yoshida Y."/>
            <person name="Gelb M.H."/>
            <person name="Glomset J.A."/>
            <person name="Takai Y."/>
        </authorList>
    </citation>
    <scope>ISOPRENYLATION AT CYS-181</scope>
    <scope>METHYLATION AT CYS-181</scope>
    <source>
        <tissue>Platelet</tissue>
    </source>
</reference>
<reference key="16">
    <citation type="journal article" date="1993" name="J. Biol. Chem.">
        <title>Mutational analysis of the cAMP-dependent protein kinase-mediated phosphorylation site of Rap1b.</title>
        <authorList>
            <person name="Altschuler D."/>
            <person name="Lapetina E.G."/>
        </authorList>
    </citation>
    <scope>PHOSPHORYLATION AT SER-179 BY PKA</scope>
    <scope>MUTAGENESIS OF SER-179</scope>
</reference>
<reference key="17">
    <citation type="journal article" date="2007" name="Genomics">
        <title>Identification of three novel proteins (SGSM1, 2, 3) which modulate small G protein (RAP and RAB)-mediated signaling pathway.</title>
        <authorList>
            <person name="Yang H."/>
            <person name="Sasaki T."/>
            <person name="Minoshima S."/>
            <person name="Shimizu N."/>
        </authorList>
    </citation>
    <scope>INTERACTION WITH SGSM1; SGSM2 AND SGSM3</scope>
</reference>
<reference key="18">
    <citation type="journal article" date="2010" name="J. Cell Sci.">
        <title>CCM1 regulates vascular-lumen organization by inducing endothelial polarity.</title>
        <authorList>
            <person name="Lampugnani M.G."/>
            <person name="Orsenigo F."/>
            <person name="Rudini N."/>
            <person name="Maddaluno L."/>
            <person name="Boulday G."/>
            <person name="Chapon F."/>
            <person name="Dejana E."/>
        </authorList>
    </citation>
    <scope>FUNCTION</scope>
    <scope>SUBCELLULAR LOCATION</scope>
</reference>
<reference key="19">
    <citation type="journal article" date="2011" name="Cell. Signal.">
        <title>Epac1 and PDZ-GEF cooperate in Rap1 mediated endothelial junction control.</title>
        <authorList>
            <person name="Pannekoek W.J."/>
            <person name="van Dijk J.J."/>
            <person name="Chan O.Y."/>
            <person name="Huveneers S."/>
            <person name="Linnemann J.R."/>
            <person name="Spanjaard E."/>
            <person name="Brouwer P.M."/>
            <person name="van der Meer A.J."/>
            <person name="Zwartkruis F.J."/>
            <person name="Rehmann H."/>
            <person name="de Rooij J."/>
            <person name="Bos J.L."/>
        </authorList>
    </citation>
    <scope>FUNCTION</scope>
</reference>
<reference key="20">
    <citation type="journal article" date="2014" name="J. Biol. Chem.">
        <title>The chaperone protein SmgGDS interacts with small GTPases entering the prenylation pathway by recognizing the last amino acid in the CAAX motif.</title>
        <authorList>
            <person name="Schuld N.J."/>
            <person name="Vervacke J.S."/>
            <person name="Lorimer E.L."/>
            <person name="Simon N.C."/>
            <person name="Hauser A.D."/>
            <person name="Barbieri J.T."/>
            <person name="Distefano M.D."/>
            <person name="Williams C.L."/>
        </authorList>
    </citation>
    <scope>INTERACTION WITH RAP1GDS1</scope>
</reference>
<reference key="21">
    <citation type="journal article" date="2008" name="EMBO J.">
        <title>The Rap-RapGAP complex: GTP hydrolysis without catalytic glutamine and arginine residues.</title>
        <authorList>
            <person name="Scrima A."/>
            <person name="Thomas C."/>
            <person name="Deaconescu D."/>
            <person name="Wittinghofer A."/>
        </authorList>
    </citation>
    <scope>X-RAY CRYSTALLOGRAPHY (3.4 ANGSTROMS) OF 1-167 IN COMPLEX WITH GTP ANALOG AND RAP1GAP</scope>
    <scope>CATALYTIC ACTIVITY</scope>
    <scope>SUBUNIT</scope>
    <scope>ACTIVITY REGULATION</scope>
    <scope>MUTAGENESIS OF TYR-32; GLN-63 AND PHE-64</scope>
</reference>
<reference key="22">
    <citation type="journal article" date="2008" name="Nature">
        <title>Structure of Epac2 in complex with a cyclic AMP analogue and RAP1B.</title>
        <authorList>
            <person name="Rehmann H."/>
            <person name="Arias-Palomo E."/>
            <person name="Hadders M.A."/>
            <person name="Schwede F."/>
            <person name="Llorca O."/>
            <person name="Bos J.L."/>
        </authorList>
    </citation>
    <scope>X-RAY CRYSTALLOGRAPHY (2.2 ANGSTROMS) OF 1-167 IN COMPLEX WITH EPAC2</scope>
    <scope>FUNCTION</scope>
    <scope>SUBUNIT</scope>
    <scope>MUTAGENESIS OF GLU-37</scope>
</reference>
<reference key="23">
    <citation type="journal article" date="2012" name="J. Biol. Chem.">
        <title>Structural basis for small G protein effector interaction of Ras-related protein 1 (Rap1) and adaptor protein Krev interaction trapped 1 (KRIT1).</title>
        <authorList>
            <person name="Li X."/>
            <person name="Zhang R."/>
            <person name="Draheim K.M."/>
            <person name="Liu W."/>
            <person name="Calderwood D.A."/>
            <person name="Boggon T.J."/>
        </authorList>
    </citation>
    <scope>X-RAY CRYSTALLOGRAPHY (1.95 ANGSTROMS) OF 1-167 OF MUTANT VAL-12 IN COMPLEX WITH KRIT1; GTP ANALOG AND MAGNESIUM</scope>
    <scope>INTERACTION WITH KRIT1</scope>
</reference>
<reference key="24">
    <citation type="journal article" date="2020" name="Clin. Genet.">
        <title>De novo missense variants in the RAP1B gene identified in two patients with syndromic thrombocytopenia.</title>
        <authorList>
            <person name="Niemann J.H."/>
            <person name="Du C."/>
            <person name="Morlot S."/>
            <person name="Schmidt G."/>
            <person name="Auber B."/>
            <person name="Kaune B."/>
            <person name="Goehring G."/>
            <person name="Ripperger T."/>
            <person name="Schlegelberger B."/>
            <person name="Hofmann W."/>
            <person name="Smol T."/>
            <person name="Ait-Yahya E."/>
            <person name="Raimbault A."/>
            <person name="Lambilliotte A."/>
            <person name="Petit F."/>
            <person name="Steinemann D."/>
        </authorList>
    </citation>
    <scope>VARIANTS THC11 VAL-12 AND ARG-60</scope>
    <scope>INVOLVEMENT IN THC11</scope>
</reference>
<reference key="25">
    <citation type="journal article" date="2022" name="Am. J. Med. Genet. A">
        <title>Third reported patient with RAP1B-related syndromic thrombocytopenia and novel clinical findings.</title>
        <authorList>
            <person name="Miller D."/>
            <person name="Saeed A."/>
            <person name="Nelson A.C."/>
            <person name="Bower M."/>
            <person name="Aggarwal A."/>
        </authorList>
    </citation>
    <scope>VARIANT THC11 GLY-59</scope>
    <scope>INVOLVEMENT IN THC11</scope>
</reference>
<reference key="26">
    <citation type="journal article" date="2024" name="Clin. Genet.">
        <title>Adding to the evidence of gene-disease association of RAP1B and syndromic thrombocytopenia.</title>
        <authorList>
            <person name="Pardo L.M."/>
            <person name="Aanicai R."/>
            <person name="Zonic E."/>
            <person name="Hakonen A.H."/>
            <person name="Zielske S."/>
            <person name="Bauer P."/>
            <person name="Bertoli-Avella A.M."/>
        </authorList>
    </citation>
    <scope>VARIANTS THC11 GLU-12 AND ARG-60</scope>
    <scope>INVOLVEMENT IN THC11</scope>
</reference>
<dbReference type="EC" id="3.6.5.2" evidence="2"/>
<dbReference type="EMBL" id="X08004">
    <property type="protein sequence ID" value="CAB46488.1"/>
    <property type="molecule type" value="mRNA"/>
</dbReference>
<dbReference type="EMBL" id="AL080212">
    <property type="protein sequence ID" value="CAB45777.1"/>
    <property type="molecule type" value="mRNA"/>
</dbReference>
<dbReference type="EMBL" id="AB062128">
    <property type="protein sequence ID" value="BAB93460.1"/>
    <property type="molecule type" value="mRNA"/>
</dbReference>
<dbReference type="EMBL" id="AF493913">
    <property type="protein sequence ID" value="AAM12627.1"/>
    <property type="molecule type" value="mRNA"/>
</dbReference>
<dbReference type="EMBL" id="AK298818">
    <property type="protein sequence ID" value="BAG60950.1"/>
    <property type="molecule type" value="mRNA"/>
</dbReference>
<dbReference type="EMBL" id="AK301401">
    <property type="protein sequence ID" value="BAG62936.1"/>
    <property type="molecule type" value="mRNA"/>
</dbReference>
<dbReference type="EMBL" id="AK301428">
    <property type="protein sequence ID" value="BAG62956.1"/>
    <property type="molecule type" value="mRNA"/>
</dbReference>
<dbReference type="EMBL" id="AK312371">
    <property type="protein sequence ID" value="BAG35289.1"/>
    <property type="molecule type" value="mRNA"/>
</dbReference>
<dbReference type="EMBL" id="CR407689">
    <property type="protein sequence ID" value="CAG28617.1"/>
    <property type="molecule type" value="mRNA"/>
</dbReference>
<dbReference type="EMBL" id="BT020093">
    <property type="protein sequence ID" value="AAV38896.1"/>
    <property type="molecule type" value="mRNA"/>
</dbReference>
<dbReference type="EMBL" id="EF581377">
    <property type="protein sequence ID" value="ABQ52130.1"/>
    <property type="molecule type" value="Genomic_DNA"/>
</dbReference>
<dbReference type="EMBL" id="AC015550">
    <property type="status" value="NOT_ANNOTATED_CDS"/>
    <property type="molecule type" value="Genomic_DNA"/>
</dbReference>
<dbReference type="EMBL" id="CH471054">
    <property type="protein sequence ID" value="EAW97189.1"/>
    <property type="molecule type" value="Genomic_DNA"/>
</dbReference>
<dbReference type="EMBL" id="BC000176">
    <property type="protein sequence ID" value="AAH00176.1"/>
    <property type="molecule type" value="mRNA"/>
</dbReference>
<dbReference type="EMBL" id="BC078173">
    <property type="protein sequence ID" value="AAH78173.1"/>
    <property type="molecule type" value="mRNA"/>
</dbReference>
<dbReference type="EMBL" id="BC095467">
    <property type="protein sequence ID" value="AAH95467.1"/>
    <property type="molecule type" value="mRNA"/>
</dbReference>
<dbReference type="CCDS" id="CCDS58252.1">
    <molecule id="P61224-2"/>
</dbReference>
<dbReference type="CCDS" id="CCDS58253.1">
    <molecule id="P61224-3"/>
</dbReference>
<dbReference type="CCDS" id="CCDS58254.1">
    <molecule id="P61224-4"/>
</dbReference>
<dbReference type="CCDS" id="CCDS8984.1">
    <molecule id="P61224-1"/>
</dbReference>
<dbReference type="PIR" id="S01952">
    <property type="entry name" value="TVHUR1"/>
</dbReference>
<dbReference type="RefSeq" id="NP_001010942.1">
    <molecule id="P61224-1"/>
    <property type="nucleotide sequence ID" value="NM_001010942.3"/>
</dbReference>
<dbReference type="RefSeq" id="NP_001238846.1">
    <molecule id="P61224-4"/>
    <property type="nucleotide sequence ID" value="NM_001251917.2"/>
</dbReference>
<dbReference type="RefSeq" id="NP_001238847.1">
    <molecule id="P61224-4"/>
    <property type="nucleotide sequence ID" value="NM_001251918.2"/>
</dbReference>
<dbReference type="RefSeq" id="NP_001238850.1">
    <molecule id="P61224-3"/>
    <property type="nucleotide sequence ID" value="NM_001251921.2"/>
</dbReference>
<dbReference type="RefSeq" id="NP_001238851.1">
    <molecule id="P61224-2"/>
    <property type="nucleotide sequence ID" value="NM_001251922.2"/>
</dbReference>
<dbReference type="RefSeq" id="NP_056461.1">
    <molecule id="P61224-1"/>
    <property type="nucleotide sequence ID" value="NM_015646.6"/>
</dbReference>
<dbReference type="PDB" id="3BRW">
    <property type="method" value="X-ray"/>
    <property type="resolution" value="3.40 A"/>
    <property type="chains" value="D=1-167"/>
</dbReference>
<dbReference type="PDB" id="3CF6">
    <property type="method" value="X-ray"/>
    <property type="resolution" value="2.20 A"/>
    <property type="chains" value="R=1-167"/>
</dbReference>
<dbReference type="PDB" id="4DXA">
    <property type="method" value="X-ray"/>
    <property type="resolution" value="1.95 A"/>
    <property type="chains" value="A=1-167"/>
</dbReference>
<dbReference type="PDB" id="4HDO">
    <property type="method" value="X-ray"/>
    <property type="resolution" value="1.67 A"/>
    <property type="chains" value="B=1-167"/>
</dbReference>
<dbReference type="PDB" id="4HDQ">
    <property type="method" value="X-ray"/>
    <property type="resolution" value="1.95 A"/>
    <property type="chains" value="B=1-167"/>
</dbReference>
<dbReference type="PDB" id="4M8N">
    <property type="method" value="X-ray"/>
    <property type="resolution" value="3.29 A"/>
    <property type="chains" value="E/F/G/H=1-166"/>
</dbReference>
<dbReference type="PDB" id="4MGI">
    <property type="method" value="X-ray"/>
    <property type="resolution" value="2.80 A"/>
    <property type="chains" value="R=1-167"/>
</dbReference>
<dbReference type="PDB" id="4MGK">
    <property type="method" value="X-ray"/>
    <property type="resolution" value="2.70 A"/>
    <property type="chains" value="R=1-167"/>
</dbReference>
<dbReference type="PDB" id="4MGY">
    <property type="method" value="X-ray"/>
    <property type="resolution" value="2.60 A"/>
    <property type="chains" value="R=1-167"/>
</dbReference>
<dbReference type="PDB" id="4MGZ">
    <property type="method" value="X-ray"/>
    <property type="resolution" value="3.00 A"/>
    <property type="chains" value="R=1-167"/>
</dbReference>
<dbReference type="PDB" id="4MH0">
    <property type="method" value="X-ray"/>
    <property type="resolution" value="2.40 A"/>
    <property type="chains" value="R=1-167"/>
</dbReference>
<dbReference type="PDB" id="5KHO">
    <property type="method" value="X-ray"/>
    <property type="resolution" value="2.78 A"/>
    <property type="chains" value="C/D=1-167"/>
</dbReference>
<dbReference type="PDB" id="6AXF">
    <property type="method" value="X-ray"/>
    <property type="resolution" value="3.10 A"/>
    <property type="chains" value="B/D/F/H/J/L/N/P=1-167"/>
</dbReference>
<dbReference type="PDB" id="6BA6">
    <property type="method" value="NMR"/>
    <property type="chains" value="B=1-167"/>
</dbReference>
<dbReference type="PDB" id="6KYK">
    <property type="method" value="X-ray"/>
    <property type="resolution" value="2.82 A"/>
    <property type="chains" value="C/D/E/F=1-167"/>
</dbReference>
<dbReference type="PDB" id="6OQ3">
    <property type="method" value="X-ray"/>
    <property type="resolution" value="1.85 A"/>
    <property type="chains" value="B=1-167"/>
</dbReference>
<dbReference type="PDB" id="6OQ4">
    <property type="method" value="X-ray"/>
    <property type="resolution" value="1.75 A"/>
    <property type="chains" value="B=1-167"/>
</dbReference>
<dbReference type="PDB" id="6UZK">
    <property type="method" value="X-ray"/>
    <property type="resolution" value="1.92 A"/>
    <property type="chains" value="B=1-167"/>
</dbReference>
<dbReference type="PDB" id="7C7I">
    <property type="method" value="X-ray"/>
    <property type="resolution" value="2.28 A"/>
    <property type="chains" value="A/B=1-167"/>
</dbReference>
<dbReference type="PDB" id="7C7J">
    <property type="method" value="X-ray"/>
    <property type="resolution" value="2.39 A"/>
    <property type="chains" value="A/B=1-167"/>
</dbReference>
<dbReference type="PDB" id="8SU8">
    <property type="method" value="X-ray"/>
    <property type="resolution" value="2.01 A"/>
    <property type="chains" value="B=1-167"/>
</dbReference>
<dbReference type="PDB" id="8T09">
    <property type="method" value="X-ray"/>
    <property type="resolution" value="2.15 A"/>
    <property type="chains" value="B=1-167"/>
</dbReference>
<dbReference type="PDB" id="8T7V">
    <property type="method" value="X-ray"/>
    <property type="resolution" value="2.25 A"/>
    <property type="chains" value="B=1-167"/>
</dbReference>
<dbReference type="PDBsum" id="3BRW"/>
<dbReference type="PDBsum" id="3CF6"/>
<dbReference type="PDBsum" id="4DXA"/>
<dbReference type="PDBsum" id="4HDO"/>
<dbReference type="PDBsum" id="4HDQ"/>
<dbReference type="PDBsum" id="4M8N"/>
<dbReference type="PDBsum" id="4MGI"/>
<dbReference type="PDBsum" id="4MGK"/>
<dbReference type="PDBsum" id="4MGY"/>
<dbReference type="PDBsum" id="4MGZ"/>
<dbReference type="PDBsum" id="4MH0"/>
<dbReference type="PDBsum" id="5KHO"/>
<dbReference type="PDBsum" id="6AXF"/>
<dbReference type="PDBsum" id="6BA6"/>
<dbReference type="PDBsum" id="6KYK"/>
<dbReference type="PDBsum" id="6OQ3"/>
<dbReference type="PDBsum" id="6OQ4"/>
<dbReference type="PDBsum" id="6UZK"/>
<dbReference type="PDBsum" id="7C7I"/>
<dbReference type="PDBsum" id="7C7J"/>
<dbReference type="PDBsum" id="8SU8"/>
<dbReference type="PDBsum" id="8T09"/>
<dbReference type="PDBsum" id="8T7V"/>
<dbReference type="SMR" id="P61224"/>
<dbReference type="BioGRID" id="111843">
    <property type="interactions" value="211"/>
</dbReference>
<dbReference type="CORUM" id="P61224"/>
<dbReference type="DIP" id="DIP-35407N"/>
<dbReference type="FunCoup" id="P61224">
    <property type="interactions" value="3164"/>
</dbReference>
<dbReference type="IntAct" id="P61224">
    <property type="interactions" value="116"/>
</dbReference>
<dbReference type="MINT" id="P61224"/>
<dbReference type="STRING" id="9606.ENSP00000250559"/>
<dbReference type="GlyGen" id="P61224">
    <property type="glycosylation" value="1 site, 1 O-linked glycan (1 site)"/>
</dbReference>
<dbReference type="iPTMnet" id="P61224"/>
<dbReference type="PhosphoSitePlus" id="P61224"/>
<dbReference type="SwissPalm" id="P61224"/>
<dbReference type="BioMuta" id="RAP1B"/>
<dbReference type="DMDM" id="47117723"/>
<dbReference type="OGP" id="P09526"/>
<dbReference type="jPOST" id="P61224"/>
<dbReference type="MassIVE" id="P61224"/>
<dbReference type="PaxDb" id="9606-ENSP00000250559"/>
<dbReference type="PeptideAtlas" id="P61224"/>
<dbReference type="PRIDE" id="P61224"/>
<dbReference type="ProteomicsDB" id="4879"/>
<dbReference type="ProteomicsDB" id="5316"/>
<dbReference type="ProteomicsDB" id="5324"/>
<dbReference type="ProteomicsDB" id="57277">
    <molecule id="P61224-1"/>
</dbReference>
<dbReference type="Pumba" id="P61224"/>
<dbReference type="TopDownProteomics" id="P61224-1">
    <molecule id="P61224-1"/>
</dbReference>
<dbReference type="TopDownProteomics" id="P61224-2">
    <molecule id="P61224-2"/>
</dbReference>
<dbReference type="Antibodypedia" id="44258">
    <property type="antibodies" value="188 antibodies from 25 providers"/>
</dbReference>
<dbReference type="DNASU" id="5908"/>
<dbReference type="Ensembl" id="ENST00000250559.14">
    <molecule id="P61224-1"/>
    <property type="protein sequence ID" value="ENSP00000250559.9"/>
    <property type="gene ID" value="ENSG00000127314.18"/>
</dbReference>
<dbReference type="Ensembl" id="ENST00000341355.9">
    <molecule id="P61224-1"/>
    <property type="protein sequence ID" value="ENSP00000441275.1"/>
    <property type="gene ID" value="ENSG00000127314.18"/>
</dbReference>
<dbReference type="Ensembl" id="ENST00000393436.9">
    <molecule id="P61224-1"/>
    <property type="protein sequence ID" value="ENSP00000377085.5"/>
    <property type="gene ID" value="ENSG00000127314.18"/>
</dbReference>
<dbReference type="Ensembl" id="ENST00000450214.6">
    <molecule id="P61224-4"/>
    <property type="protein sequence ID" value="ENSP00000399986.2"/>
    <property type="gene ID" value="ENSG00000127314.18"/>
</dbReference>
<dbReference type="Ensembl" id="ENST00000537460.5">
    <molecule id="P61224-1"/>
    <property type="protein sequence ID" value="ENSP00000439966.1"/>
    <property type="gene ID" value="ENSG00000127314.18"/>
</dbReference>
<dbReference type="Ensembl" id="ENST00000539091.5">
    <molecule id="P61224-4"/>
    <property type="protein sequence ID" value="ENSP00000444830.1"/>
    <property type="gene ID" value="ENSG00000127314.18"/>
</dbReference>
<dbReference type="Ensembl" id="ENST00000540209.5">
    <molecule id="P61224-3"/>
    <property type="protein sequence ID" value="ENSP00000446318.1"/>
    <property type="gene ID" value="ENSG00000127314.18"/>
</dbReference>
<dbReference type="Ensembl" id="ENST00000542145.5">
    <molecule id="P61224-2"/>
    <property type="protein sequence ID" value="ENSP00000440014.1"/>
    <property type="gene ID" value="ENSG00000127314.18"/>
</dbReference>
<dbReference type="GeneID" id="5908"/>
<dbReference type="KEGG" id="hsa:5908"/>
<dbReference type="MANE-Select" id="ENST00000250559.14">
    <property type="protein sequence ID" value="ENSP00000250559.9"/>
    <property type="RefSeq nucleotide sequence ID" value="NM_001010942.3"/>
    <property type="RefSeq protein sequence ID" value="NP_001010942.1"/>
</dbReference>
<dbReference type="UCSC" id="uc001sub.5">
    <molecule id="P61224-1"/>
    <property type="organism name" value="human"/>
</dbReference>
<dbReference type="AGR" id="HGNC:9857"/>
<dbReference type="CTD" id="5908"/>
<dbReference type="DisGeNET" id="5908"/>
<dbReference type="GeneCards" id="RAP1B"/>
<dbReference type="HGNC" id="HGNC:9857">
    <property type="gene designation" value="RAP1B"/>
</dbReference>
<dbReference type="HPA" id="ENSG00000127314">
    <property type="expression patterns" value="Low tissue specificity"/>
</dbReference>
<dbReference type="MalaCards" id="RAP1B"/>
<dbReference type="MIM" id="179530">
    <property type="type" value="gene"/>
</dbReference>
<dbReference type="MIM" id="620654">
    <property type="type" value="phenotype"/>
</dbReference>
<dbReference type="neXtProt" id="NX_P61224"/>
<dbReference type="OpenTargets" id="ENSG00000127314"/>
<dbReference type="PharmGKB" id="PA34219"/>
<dbReference type="VEuPathDB" id="HostDB:ENSG00000127314"/>
<dbReference type="eggNOG" id="KOG0395">
    <property type="taxonomic scope" value="Eukaryota"/>
</dbReference>
<dbReference type="GeneTree" id="ENSGT00940000154429"/>
<dbReference type="InParanoid" id="P61224"/>
<dbReference type="OMA" id="MPLREFK"/>
<dbReference type="OrthoDB" id="5976022at2759"/>
<dbReference type="PAN-GO" id="P61224">
    <property type="GO annotations" value="7 GO annotations based on evolutionary models"/>
</dbReference>
<dbReference type="PhylomeDB" id="P61224"/>
<dbReference type="TreeFam" id="TF313014"/>
<dbReference type="PathwayCommons" id="P61224"/>
<dbReference type="Reactome" id="R-HSA-354192">
    <property type="pathway name" value="Integrin signaling"/>
</dbReference>
<dbReference type="Reactome" id="R-HSA-354194">
    <property type="pathway name" value="GRB2:SOS provides linkage to MAPK signaling for Integrins"/>
</dbReference>
<dbReference type="Reactome" id="R-HSA-372708">
    <property type="pathway name" value="p130Cas linkage to MAPK signaling for integrins"/>
</dbReference>
<dbReference type="Reactome" id="R-HSA-392517">
    <property type="pathway name" value="Rap1 signalling"/>
</dbReference>
<dbReference type="Reactome" id="R-HSA-5674135">
    <property type="pathway name" value="MAP2K and MAPK activation"/>
</dbReference>
<dbReference type="Reactome" id="R-HSA-6798695">
    <property type="pathway name" value="Neutrophil degranulation"/>
</dbReference>
<dbReference type="Reactome" id="R-HSA-6802946">
    <property type="pathway name" value="Signaling by moderate kinase activity BRAF mutants"/>
</dbReference>
<dbReference type="Reactome" id="R-HSA-6802948">
    <property type="pathway name" value="Signaling by high-kinase activity BRAF mutants"/>
</dbReference>
<dbReference type="Reactome" id="R-HSA-6802952">
    <property type="pathway name" value="Signaling by BRAF and RAF1 fusions"/>
</dbReference>
<dbReference type="Reactome" id="R-HSA-6802955">
    <property type="pathway name" value="Paradoxical activation of RAF signaling by kinase inactive BRAF"/>
</dbReference>
<dbReference type="Reactome" id="R-HSA-8875555">
    <property type="pathway name" value="MET activates RAP1 and RAC1"/>
</dbReference>
<dbReference type="Reactome" id="R-HSA-8950505">
    <property type="pathway name" value="Gene and protein expression by JAK-STAT signaling after Interleukin-12 stimulation"/>
</dbReference>
<dbReference type="Reactome" id="R-HSA-9649948">
    <property type="pathway name" value="Signaling downstream of RAS mutants"/>
</dbReference>
<dbReference type="Reactome" id="R-HSA-9656223">
    <property type="pathway name" value="Signaling by RAF1 mutants"/>
</dbReference>
<dbReference type="SignaLink" id="P61224"/>
<dbReference type="SIGNOR" id="P61224"/>
<dbReference type="BioGRID-ORCS" id="5908">
    <property type="hits" value="137 hits in 1096 CRISPR screens"/>
</dbReference>
<dbReference type="ChiTaRS" id="RAP1B">
    <property type="organism name" value="human"/>
</dbReference>
<dbReference type="EvolutionaryTrace" id="P61224"/>
<dbReference type="GeneWiki" id="RAP1B"/>
<dbReference type="GenomeRNAi" id="5908"/>
<dbReference type="Pharos" id="P61224">
    <property type="development level" value="Tbio"/>
</dbReference>
<dbReference type="PRO" id="PR:P61224"/>
<dbReference type="Proteomes" id="UP000005640">
    <property type="component" value="Chromosome 12"/>
</dbReference>
<dbReference type="RNAct" id="P61224">
    <property type="molecule type" value="protein"/>
</dbReference>
<dbReference type="Bgee" id="ENSG00000127314">
    <property type="expression patterns" value="Expressed in monocyte and 102 other cell types or tissues"/>
</dbReference>
<dbReference type="ExpressionAtlas" id="P61224">
    <property type="expression patterns" value="baseline and differential"/>
</dbReference>
<dbReference type="GO" id="GO:0035577">
    <property type="term" value="C:azurophil granule membrane"/>
    <property type="evidence" value="ECO:0000304"/>
    <property type="project" value="Reactome"/>
</dbReference>
<dbReference type="GO" id="GO:0005911">
    <property type="term" value="C:cell-cell junction"/>
    <property type="evidence" value="ECO:0000314"/>
    <property type="project" value="UniProtKB"/>
</dbReference>
<dbReference type="GO" id="GO:0005829">
    <property type="term" value="C:cytosol"/>
    <property type="evidence" value="ECO:0000314"/>
    <property type="project" value="UniProtKB"/>
</dbReference>
<dbReference type="GO" id="GO:0070062">
    <property type="term" value="C:extracellular exosome"/>
    <property type="evidence" value="ECO:0007005"/>
    <property type="project" value="UniProtKB"/>
</dbReference>
<dbReference type="GO" id="GO:0098978">
    <property type="term" value="C:glutamatergic synapse"/>
    <property type="evidence" value="ECO:0007669"/>
    <property type="project" value="Ensembl"/>
</dbReference>
<dbReference type="GO" id="GO:0005811">
    <property type="term" value="C:lipid droplet"/>
    <property type="evidence" value="ECO:0000314"/>
    <property type="project" value="UniProtKB"/>
</dbReference>
<dbReference type="GO" id="GO:0016020">
    <property type="term" value="C:membrane"/>
    <property type="evidence" value="ECO:0000304"/>
    <property type="project" value="UniProtKB"/>
</dbReference>
<dbReference type="GO" id="GO:0005886">
    <property type="term" value="C:plasma membrane"/>
    <property type="evidence" value="ECO:0000318"/>
    <property type="project" value="GO_Central"/>
</dbReference>
<dbReference type="GO" id="GO:0003925">
    <property type="term" value="F:G protein activity"/>
    <property type="evidence" value="ECO:0007669"/>
    <property type="project" value="UniProtKB-EC"/>
</dbReference>
<dbReference type="GO" id="GO:0019003">
    <property type="term" value="F:GDP binding"/>
    <property type="evidence" value="ECO:0000314"/>
    <property type="project" value="UniProtKB"/>
</dbReference>
<dbReference type="GO" id="GO:0005525">
    <property type="term" value="F:GTP binding"/>
    <property type="evidence" value="ECO:0000314"/>
    <property type="project" value="UniProtKB"/>
</dbReference>
<dbReference type="GO" id="GO:0003924">
    <property type="term" value="F:GTPase activity"/>
    <property type="evidence" value="ECO:0000314"/>
    <property type="project" value="UniProtKB"/>
</dbReference>
<dbReference type="GO" id="GO:0044877">
    <property type="term" value="F:protein-containing complex binding"/>
    <property type="evidence" value="ECO:0000314"/>
    <property type="project" value="MGI"/>
</dbReference>
<dbReference type="GO" id="GO:0017156">
    <property type="term" value="P:calcium-ion regulated exocytosis"/>
    <property type="evidence" value="ECO:0007669"/>
    <property type="project" value="Ensembl"/>
</dbReference>
<dbReference type="GO" id="GO:0008283">
    <property type="term" value="P:cell population proliferation"/>
    <property type="evidence" value="ECO:0007669"/>
    <property type="project" value="Ensembl"/>
</dbReference>
<dbReference type="GO" id="GO:0071320">
    <property type="term" value="P:cellular response to cAMP"/>
    <property type="evidence" value="ECO:0000314"/>
    <property type="project" value="UniProtKB"/>
</dbReference>
<dbReference type="GO" id="GO:0061028">
    <property type="term" value="P:establishment of endothelial barrier"/>
    <property type="evidence" value="ECO:0000315"/>
    <property type="project" value="UniProtKB"/>
</dbReference>
<dbReference type="GO" id="GO:0051649">
    <property type="term" value="P:establishment of localization in cell"/>
    <property type="evidence" value="ECO:0007669"/>
    <property type="project" value="Ensembl"/>
</dbReference>
<dbReference type="GO" id="GO:0099010">
    <property type="term" value="P:modification of postsynaptic structure"/>
    <property type="evidence" value="ECO:0007669"/>
    <property type="project" value="Ensembl"/>
</dbReference>
<dbReference type="GO" id="GO:0045955">
    <property type="term" value="P:negative regulation of calcium ion-dependent exocytosis"/>
    <property type="evidence" value="ECO:0007669"/>
    <property type="project" value="Ensembl"/>
</dbReference>
<dbReference type="GO" id="GO:2000301">
    <property type="term" value="P:negative regulation of synaptic vesicle exocytosis"/>
    <property type="evidence" value="ECO:0000318"/>
    <property type="project" value="GO_Central"/>
</dbReference>
<dbReference type="GO" id="GO:0070374">
    <property type="term" value="P:positive regulation of ERK1 and ERK2 cascade"/>
    <property type="evidence" value="ECO:0007669"/>
    <property type="project" value="Ensembl"/>
</dbReference>
<dbReference type="GO" id="GO:0033625">
    <property type="term" value="P:positive regulation of integrin activation"/>
    <property type="evidence" value="ECO:0000315"/>
    <property type="project" value="ARUK-UCL"/>
</dbReference>
<dbReference type="GO" id="GO:0032486">
    <property type="term" value="P:Rap protein signal transduction"/>
    <property type="evidence" value="ECO:0000315"/>
    <property type="project" value="UniProtKB"/>
</dbReference>
<dbReference type="GO" id="GO:1901888">
    <property type="term" value="P:regulation of cell junction assembly"/>
    <property type="evidence" value="ECO:0000315"/>
    <property type="project" value="UniProtKB"/>
</dbReference>
<dbReference type="GO" id="GO:2000114">
    <property type="term" value="P:regulation of establishment of cell polarity"/>
    <property type="evidence" value="ECO:0000315"/>
    <property type="project" value="UniProtKB"/>
</dbReference>
<dbReference type="CDD" id="cd04175">
    <property type="entry name" value="Rap1"/>
    <property type="match status" value="1"/>
</dbReference>
<dbReference type="FunFam" id="3.40.50.300:FF:000182">
    <property type="entry name" value="ras-related protein Rap-1b"/>
    <property type="match status" value="1"/>
</dbReference>
<dbReference type="Gene3D" id="3.40.50.300">
    <property type="entry name" value="P-loop containing nucleotide triphosphate hydrolases"/>
    <property type="match status" value="1"/>
</dbReference>
<dbReference type="InterPro" id="IPR027417">
    <property type="entry name" value="P-loop_NTPase"/>
</dbReference>
<dbReference type="InterPro" id="IPR038851">
    <property type="entry name" value="Rap1"/>
</dbReference>
<dbReference type="InterPro" id="IPR005225">
    <property type="entry name" value="Small_GTP-bd"/>
</dbReference>
<dbReference type="InterPro" id="IPR001806">
    <property type="entry name" value="Small_GTPase"/>
</dbReference>
<dbReference type="InterPro" id="IPR020849">
    <property type="entry name" value="Small_GTPase_Ras-type"/>
</dbReference>
<dbReference type="NCBIfam" id="TIGR00231">
    <property type="entry name" value="small_GTP"/>
    <property type="match status" value="1"/>
</dbReference>
<dbReference type="PANTHER" id="PTHR24070">
    <property type="entry name" value="RAS, DI-RAS, AND RHEB FAMILY MEMBERS OF SMALL GTPASE SUPERFAMILY"/>
    <property type="match status" value="1"/>
</dbReference>
<dbReference type="Pfam" id="PF00071">
    <property type="entry name" value="Ras"/>
    <property type="match status" value="1"/>
</dbReference>
<dbReference type="PRINTS" id="PR00449">
    <property type="entry name" value="RASTRNSFRMNG"/>
</dbReference>
<dbReference type="SMART" id="SM00175">
    <property type="entry name" value="RAB"/>
    <property type="match status" value="1"/>
</dbReference>
<dbReference type="SMART" id="SM00176">
    <property type="entry name" value="RAN"/>
    <property type="match status" value="1"/>
</dbReference>
<dbReference type="SMART" id="SM00173">
    <property type="entry name" value="RAS"/>
    <property type="match status" value="1"/>
</dbReference>
<dbReference type="SMART" id="SM00174">
    <property type="entry name" value="RHO"/>
    <property type="match status" value="1"/>
</dbReference>
<dbReference type="SUPFAM" id="SSF52540">
    <property type="entry name" value="P-loop containing nucleoside triphosphate hydrolases"/>
    <property type="match status" value="1"/>
</dbReference>
<dbReference type="PROSITE" id="PS51421">
    <property type="entry name" value="RAS"/>
    <property type="match status" value="1"/>
</dbReference>
<evidence type="ECO:0000269" key="1">
    <source>
    </source>
</evidence>
<evidence type="ECO:0000269" key="2">
    <source>
    </source>
</evidence>
<evidence type="ECO:0000269" key="3">
    <source>
    </source>
</evidence>
<evidence type="ECO:0000269" key="4">
    <source>
    </source>
</evidence>
<evidence type="ECO:0000269" key="5">
    <source>
    </source>
</evidence>
<evidence type="ECO:0000269" key="6">
    <source>
    </source>
</evidence>
<evidence type="ECO:0000269" key="7">
    <source>
    </source>
</evidence>
<evidence type="ECO:0000269" key="8">
    <source>
    </source>
</evidence>
<evidence type="ECO:0000269" key="9">
    <source>
    </source>
</evidence>
<evidence type="ECO:0000269" key="10">
    <source>
    </source>
</evidence>
<evidence type="ECO:0000269" key="11">
    <source>
    </source>
</evidence>
<evidence type="ECO:0000269" key="12">
    <source>
    </source>
</evidence>
<evidence type="ECO:0000269" key="13">
    <source>
    </source>
</evidence>
<evidence type="ECO:0000303" key="14">
    <source>
    </source>
</evidence>
<evidence type="ECO:0000305" key="15"/>
<evidence type="ECO:0000305" key="16">
    <source>
    </source>
</evidence>
<evidence type="ECO:0007829" key="17">
    <source>
        <dbReference type="PDB" id="3BRW"/>
    </source>
</evidence>
<evidence type="ECO:0007829" key="18">
    <source>
        <dbReference type="PDB" id="3CF6"/>
    </source>
</evidence>
<evidence type="ECO:0007829" key="19">
    <source>
        <dbReference type="PDB" id="4DXA"/>
    </source>
</evidence>
<evidence type="ECO:0007829" key="20">
    <source>
        <dbReference type="PDB" id="4HDO"/>
    </source>
</evidence>
<evidence type="ECO:0007829" key="21">
    <source>
        <dbReference type="PDB" id="4M8N"/>
    </source>
</evidence>
<evidence type="ECO:0007829" key="22">
    <source>
        <dbReference type="PDB" id="6AXF"/>
    </source>
</evidence>
<evidence type="ECO:0007829" key="23">
    <source>
        <dbReference type="PDB" id="6BA6"/>
    </source>
</evidence>
<organism>
    <name type="scientific">Homo sapiens</name>
    <name type="common">Human</name>
    <dbReference type="NCBI Taxonomy" id="9606"/>
    <lineage>
        <taxon>Eukaryota</taxon>
        <taxon>Metazoa</taxon>
        <taxon>Chordata</taxon>
        <taxon>Craniata</taxon>
        <taxon>Vertebrata</taxon>
        <taxon>Euteleostomi</taxon>
        <taxon>Mammalia</taxon>
        <taxon>Eutheria</taxon>
        <taxon>Euarchontoglires</taxon>
        <taxon>Primates</taxon>
        <taxon>Haplorrhini</taxon>
        <taxon>Catarrhini</taxon>
        <taxon>Hominidae</taxon>
        <taxon>Homo</taxon>
    </lineage>
</organism>
<sequence length="184" mass="20825">MREYKLVVLGSGGVGKSALTVQFVQGIFVEKYDPTIEDSYRKQVEVDAQQCMLEILDTAGTEQFTAMRDLYMKNGQGFALVYSITAQSTFNDLQDLREQILRVKDTDDVPMILVGNKCDLEDERVVGKEQGQNLARQWNNCAFLESSAKSKINVNEIFYDLVRQINRKTPVPGKARKKSSCQLL</sequence>
<gene>
    <name type="primary">RAP1B</name>
    <name type="ORF">OK/SW-cl.11</name>
</gene>
<protein>
    <recommendedName>
        <fullName>Ras-related protein Rap-1b</fullName>
        <ecNumber evidence="2">3.6.5.2</ecNumber>
    </recommendedName>
    <alternativeName>
        <fullName>GTP-binding protein smg p21B</fullName>
    </alternativeName>
</protein>
<proteinExistence type="evidence at protein level"/>
<feature type="chain" id="PRO_0000030209" description="Ras-related protein Rap-1b">
    <location>
        <begin position="1"/>
        <end position="181"/>
    </location>
</feature>
<feature type="propeptide" id="PRO_0000030210" description="Removed in mature form">
    <location>
        <begin position="182"/>
        <end position="184"/>
    </location>
</feature>
<feature type="region of interest" description="Interaction with KRIT1" evidence="7">
    <location>
        <begin position="25"/>
        <end position="67"/>
    </location>
</feature>
<feature type="short sequence motif" description="Effector region" evidence="15">
    <location>
        <begin position="32"/>
        <end position="40"/>
    </location>
</feature>
<feature type="binding site" evidence="2 7">
    <location>
        <begin position="10"/>
        <end position="18"/>
    </location>
    <ligand>
        <name>GTP</name>
        <dbReference type="ChEBI" id="CHEBI:37565"/>
    </ligand>
</feature>
<feature type="binding site" evidence="2 7">
    <location>
        <begin position="57"/>
        <end position="61"/>
    </location>
    <ligand>
        <name>GTP</name>
        <dbReference type="ChEBI" id="CHEBI:37565"/>
    </ligand>
</feature>
<feature type="binding site" evidence="2 7">
    <location>
        <begin position="116"/>
        <end position="119"/>
    </location>
    <ligand>
        <name>GTP</name>
        <dbReference type="ChEBI" id="CHEBI:37565"/>
    </ligand>
</feature>
<feature type="binding site" evidence="2 7">
    <location>
        <begin position="147"/>
        <end position="149"/>
    </location>
    <ligand>
        <name>GTP</name>
        <dbReference type="ChEBI" id="CHEBI:37565"/>
    </ligand>
</feature>
<feature type="modified residue" description="ADP-ribosylserine; by botulinum toxin" evidence="16">
    <location>
        <position position="39"/>
    </location>
</feature>
<feature type="modified residue" description="Phosphoserine; by PKA" evidence="13">
    <location>
        <position position="179"/>
    </location>
</feature>
<feature type="modified residue" description="Cysteine methyl ester" evidence="5">
    <location>
        <position position="181"/>
    </location>
</feature>
<feature type="lipid moiety-binding region" description="S-geranylgeranyl cysteine" evidence="5">
    <location>
        <position position="181"/>
    </location>
</feature>
<feature type="splice variant" id="VSP_045303" description="In isoform 4." evidence="14">
    <location>
        <begin position="20"/>
        <end position="61"/>
    </location>
</feature>
<feature type="splice variant" id="VSP_045304" description="In isoform 3." evidence="14">
    <location>
        <begin position="43"/>
        <end position="61"/>
    </location>
</feature>
<feature type="splice variant" id="VSP_045305" description="In isoform 2." evidence="14">
    <location>
        <begin position="62"/>
        <end position="108"/>
    </location>
</feature>
<feature type="sequence variant" id="VAR_089200" description="In THC11; likely pathogenic." evidence="12">
    <original>G</original>
    <variation>E</variation>
    <location>
        <position position="12"/>
    </location>
</feature>
<feature type="sequence variant" id="VAR_089201" description="In THC11; likely pathogenic." evidence="10">
    <original>G</original>
    <variation>V</variation>
    <location>
        <position position="12"/>
    </location>
</feature>
<feature type="sequence variant" id="VAR_089202" description="In THC11; likely pathogenic." evidence="11">
    <original>A</original>
    <variation>G</variation>
    <location>
        <position position="59"/>
    </location>
</feature>
<feature type="sequence variant" id="VAR_089203" description="In THC11; likely pathogenic." evidence="10 12">
    <original>G</original>
    <variation>R</variation>
    <location>
        <position position="60"/>
    </location>
</feature>
<feature type="mutagenesis site" description="Impairs interaction with KRIT1.">
    <original>Q</original>
    <variation>A</variation>
    <location>
        <position position="25"/>
    </location>
</feature>
<feature type="mutagenesis site" description="25-fold reduction in RAP1GAP-stimulated GTPase activity." evidence="2">
    <original>Y</original>
    <variation>A</variation>
    <location>
        <position position="32"/>
    </location>
</feature>
<feature type="mutagenesis site" description="2-fold reduction in RAP1GAP-stimulated GTPase activity." evidence="2">
    <original>Y</original>
    <variation>F</variation>
    <location>
        <position position="32"/>
    </location>
</feature>
<feature type="mutagenesis site" description="Strong reduction in nucleotide exchange with EPAC2." evidence="3">
    <original>E</original>
    <variation>A</variation>
    <location>
        <position position="37"/>
    </location>
</feature>
<feature type="mutagenesis site" description="Impairs interaction with KRIT1.">
    <original>D</original>
    <variation>A</variation>
    <location>
        <position position="38"/>
    </location>
</feature>
<feature type="mutagenesis site" description="Abolishes complex formation with RAP1GAP. Loss GTPase activity." evidence="2">
    <original>Q</original>
    <variation>E</variation>
    <location>
        <position position="63"/>
    </location>
</feature>
<feature type="mutagenesis site" description="Abolishes complex formation with RAP1GAP. Loss GTPase activity." evidence="2">
    <original>F</original>
    <variation>A</variation>
    <location>
        <position position="64"/>
    </location>
</feature>
<feature type="mutagenesis site" description="Abolishes phosphorylation by PKA." evidence="13">
    <original>S</original>
    <variation>A</variation>
    <location>
        <position position="179"/>
    </location>
</feature>
<feature type="sequence conflict" description="In Ref. 11; AAH95467." evidence="15" ref="11">
    <original>V</original>
    <variation>F</variation>
    <location>
        <position position="8"/>
    </location>
</feature>
<feature type="sequence conflict" description="In Ref. 11; AAH78173." evidence="15" ref="11">
    <original>K</original>
    <variation>N</variation>
    <location>
        <position position="16"/>
    </location>
</feature>
<feature type="strand" evidence="20">
    <location>
        <begin position="2"/>
        <end position="9"/>
    </location>
</feature>
<feature type="helix" evidence="22">
    <location>
        <begin position="12"/>
        <end position="14"/>
    </location>
</feature>
<feature type="helix" evidence="20">
    <location>
        <begin position="16"/>
        <end position="25"/>
    </location>
</feature>
<feature type="turn" evidence="18">
    <location>
        <begin position="27"/>
        <end position="29"/>
    </location>
</feature>
<feature type="strand" evidence="20">
    <location>
        <begin position="36"/>
        <end position="46"/>
    </location>
</feature>
<feature type="strand" evidence="20">
    <location>
        <begin position="49"/>
        <end position="58"/>
    </location>
</feature>
<feature type="strand" evidence="19">
    <location>
        <begin position="60"/>
        <end position="62"/>
    </location>
</feature>
<feature type="strand" evidence="21">
    <location>
        <begin position="63"/>
        <end position="65"/>
    </location>
</feature>
<feature type="helix" evidence="20">
    <location>
        <begin position="68"/>
        <end position="74"/>
    </location>
</feature>
<feature type="strand" evidence="20">
    <location>
        <begin position="76"/>
        <end position="83"/>
    </location>
</feature>
<feature type="helix" evidence="20">
    <location>
        <begin position="87"/>
        <end position="91"/>
    </location>
</feature>
<feature type="helix" evidence="20">
    <location>
        <begin position="93"/>
        <end position="104"/>
    </location>
</feature>
<feature type="strand" evidence="17">
    <location>
        <begin position="105"/>
        <end position="107"/>
    </location>
</feature>
<feature type="strand" evidence="20">
    <location>
        <begin position="111"/>
        <end position="116"/>
    </location>
</feature>
<feature type="helix" evidence="23">
    <location>
        <begin position="118"/>
        <end position="120"/>
    </location>
</feature>
<feature type="helix" evidence="20">
    <location>
        <begin position="121"/>
        <end position="123"/>
    </location>
</feature>
<feature type="helix" evidence="20">
    <location>
        <begin position="128"/>
        <end position="137"/>
    </location>
</feature>
<feature type="strand" evidence="20">
    <location>
        <begin position="142"/>
        <end position="145"/>
    </location>
</feature>
<feature type="turn" evidence="20">
    <location>
        <begin position="148"/>
        <end position="151"/>
    </location>
</feature>
<feature type="helix" evidence="20">
    <location>
        <begin position="154"/>
        <end position="166"/>
    </location>
</feature>
<accession>P61224</accession>
<accession>B2R5Z2</accession>
<accession>B4DQI8</accession>
<accession>B4DW74</accession>
<accession>B4DW94</accession>
<accession>P09526</accession>
<accession>Q502X3</accession>
<accession>Q5TZR4</accession>
<accession>Q6DCA1</accession>
<accession>Q6LES0</accession>
<name>RAP1B_HUMAN</name>
<comment type="function">
    <text evidence="3 4 6">GTP-binding protein that possesses intrinsic GTPase activity. Contributes to the polarizing activity of KRIT1 and CDH5 in the establishment and maintenance of correct endothelial cell polarity and vascular lumen. Required for the localization of phosphorylated PRKCZ, PARD3 and TIAM1 to the cell junction. Plays a role in the establishment of basal endothelial barrier function.</text>
</comment>
<comment type="catalytic activity">
    <reaction evidence="2">
        <text>GTP + H2O = GDP + phosphate + H(+)</text>
        <dbReference type="Rhea" id="RHEA:19669"/>
        <dbReference type="ChEBI" id="CHEBI:15377"/>
        <dbReference type="ChEBI" id="CHEBI:15378"/>
        <dbReference type="ChEBI" id="CHEBI:37565"/>
        <dbReference type="ChEBI" id="CHEBI:43474"/>
        <dbReference type="ChEBI" id="CHEBI:58189"/>
        <dbReference type="EC" id="3.6.5.2"/>
    </reaction>
</comment>
<comment type="activity regulation">
    <text evidence="2">Activated by binding to the GTPase-activating protein RAP1GAP. Activated by guanine nucleotide-exchange factor (GEF) EPAC2 in a cAMP-dependent manner.</text>
</comment>
<comment type="subunit">
    <text evidence="1 2 3 7 8">Heterodimer with RAP1GAP (PubMed:18309292). Interacts with EPAC2 (PubMed:18660803). Interacts with SGSM1 (PubMed:17509819). Interacts with SGSM2 (PubMed:17509819). Interacts with SGSM3 (PubMed:17509819). Interacts with KRIT1 (PubMed:22577140). Interacts with RAP1GDS1 (PubMed:24415755).</text>
</comment>
<comment type="interaction">
    <interactant intactId="EBI-358143">
        <id>P61224</id>
    </interactant>
    <interactant intactId="EBI-1049597">
        <id>P27797</id>
        <label>CALR</label>
    </interactant>
    <organismsDiffer>false</organismsDiffer>
    <experiments>3</experiments>
</comment>
<comment type="interaction">
    <interactant intactId="EBI-358143">
        <id>P61224</id>
    </interactant>
    <interactant intactId="EBI-351007">
        <id>P36957</id>
        <label>DLST</label>
    </interactant>
    <organismsDiffer>false</organismsDiffer>
    <experiments>3</experiments>
</comment>
<comment type="interaction">
    <interactant intactId="EBI-358143">
        <id>P61224</id>
    </interactant>
    <interactant intactId="EBI-11522433">
        <id>Q5JR59-3</id>
        <label>MTUS2</label>
    </interactant>
    <organismsDiffer>false</organismsDiffer>
    <experiments>3</experiments>
</comment>
<comment type="interaction">
    <interactant intactId="EBI-358143">
        <id>P61224</id>
    </interactant>
    <interactant intactId="EBI-1055945">
        <id>Q8TDX7</id>
        <label>NEK7</label>
    </interactant>
    <organismsDiffer>false</organismsDiffer>
    <experiments>3</experiments>
</comment>
<comment type="interaction">
    <interactant intactId="EBI-358143">
        <id>P61224</id>
    </interactant>
    <interactant intactId="EBI-365861">
        <id>Q12967</id>
        <label>RALGDS</label>
    </interactant>
    <organismsDiffer>false</organismsDiffer>
    <experiments>2</experiments>
</comment>
<comment type="interaction">
    <interactant intactId="EBI-358143">
        <id>P61224</id>
    </interactant>
    <interactant intactId="EBI-12005546">
        <id>Q12967-6</id>
        <label>RALGDS</label>
    </interactant>
    <organismsDiffer>false</organismsDiffer>
    <experiments>3</experiments>
</comment>
<comment type="interaction">
    <interactant intactId="EBI-358143">
        <id>P61224</id>
    </interactant>
    <interactant intactId="EBI-722307">
        <id>P47736</id>
        <label>RAP1GAP</label>
    </interactant>
    <organismsDiffer>false</organismsDiffer>
    <experiments>3</experiments>
</comment>
<comment type="interaction">
    <interactant intactId="EBI-358143">
        <id>P61224</id>
    </interactant>
    <interactant intactId="EBI-367390">
        <id>Q8WWW0</id>
        <label>RASSF5</label>
    </interactant>
    <organismsDiffer>false</organismsDiffer>
    <experiments>3</experiments>
</comment>
<comment type="interaction">
    <interactant intactId="EBI-358143">
        <id>P61224</id>
    </interactant>
    <interactant intactId="EBI-15566495">
        <id>Q9EQZ6-3</id>
        <label>Rapgef4</label>
    </interactant>
    <organismsDiffer>true</organismsDiffer>
    <experiments>3</experiments>
</comment>
<comment type="subcellular location">
    <subcellularLocation>
        <location evidence="9">Cell membrane</location>
    </subcellularLocation>
    <subcellularLocation>
        <location evidence="9">Cytoplasm</location>
        <location evidence="9">Cytosol</location>
    </subcellularLocation>
    <subcellularLocation>
        <location evidence="4">Cell junction</location>
    </subcellularLocation>
    <text evidence="4 9">May shuttle between plasma membrane and cytosol (PubMed:3141412). Presence of KRIT1 and CDH5 is required for its localization to the cell junction (PubMed:20332120).</text>
</comment>
<comment type="alternative products">
    <event type="alternative splicing"/>
    <isoform>
        <id>P61224-1</id>
        <name>1</name>
        <sequence type="displayed"/>
    </isoform>
    <isoform>
        <id>P61224-2</id>
        <name>2</name>
        <sequence type="described" ref="VSP_045305"/>
    </isoform>
    <isoform>
        <id>P61224-3</id>
        <name>3</name>
        <sequence type="described" ref="VSP_045304"/>
    </isoform>
    <isoform>
        <id>P61224-4</id>
        <name>4</name>
        <sequence type="described" ref="VSP_045303"/>
    </isoform>
</comment>
<comment type="disease" evidence="10 11 12">
    <disease id="DI-06814">
        <name>Thrombocytopenia 11 with multiple congenital anomalies and dysmorphic facies</name>
        <acronym>THC11</acronym>
        <description>A form of thrombocytopenia, a hematologic disorder defined by a decrease in the number of platelets in circulating blood, resulting in the potential for increased bleeding and decreased ability for clotting. THC11 is an autosomal dominant, syndromic form. Affected individuals have chronic and persistent thrombocytopenia, dysmorphic facial features, and multiple congenital anomalies with involvement of the cardiovascular, genitourinary, neurologic and skeletal systems. Additional features include leukopenia or anemia, poor growth with microcephaly, hypotonia, and mildly impaired intellectual development or learning disabilities.</description>
        <dbReference type="MIM" id="620654"/>
    </disease>
    <text>The disease is caused by variants affecting the gene represented in this entry.</text>
</comment>
<comment type="similarity">
    <text evidence="15">Belongs to the small GTPase superfamily. Ras family.</text>
</comment>
<comment type="online information" name="Atlas of Genetics and Cytogenetics in Oncology and Haematology">
    <link uri="https://atlasgeneticsoncology.org/gene/273/RAP1B"/>
</comment>
<keyword id="KW-0002">3D-structure</keyword>
<keyword id="KW-0013">ADP-ribosylation</keyword>
<keyword id="KW-0025">Alternative splicing</keyword>
<keyword id="KW-0965">Cell junction</keyword>
<keyword id="KW-1003">Cell membrane</keyword>
<keyword id="KW-0963">Cytoplasm</keyword>
<keyword id="KW-0903">Direct protein sequencing</keyword>
<keyword id="KW-0225">Disease variant</keyword>
<keyword id="KW-0342">GTP-binding</keyword>
<keyword id="KW-0378">Hydrolase</keyword>
<keyword id="KW-0449">Lipoprotein</keyword>
<keyword id="KW-0472">Membrane</keyword>
<keyword id="KW-0488">Methylation</keyword>
<keyword id="KW-0547">Nucleotide-binding</keyword>
<keyword id="KW-0597">Phosphoprotein</keyword>
<keyword id="KW-0636">Prenylation</keyword>
<keyword id="KW-1267">Proteomics identification</keyword>
<keyword id="KW-1185">Reference proteome</keyword>